<name>COX2_PONPY</name>
<comment type="function">
    <text evidence="2">Component of the cytochrome c oxidase, the last enzyme in the mitochondrial electron transport chain which drives oxidative phosphorylation. The respiratory chain contains 3 multisubunit complexes succinate dehydrogenase (complex II, CII), ubiquinol-cytochrome c oxidoreductase (cytochrome b-c1 complex, complex III, CIII) and cytochrome c oxidase (complex IV, CIV), that cooperate to transfer electrons derived from NADH and succinate to molecular oxygen, creating an electrochemical gradient over the inner membrane that drives transmembrane transport and the ATP synthase. Cytochrome c oxidase is the component of the respiratory chain that catalyzes the reduction of oxygen to water. Electrons originating from reduced cytochrome c in the intermembrane space (IMS) are transferred via the dinuclear copper A center (CU(A)) of subunit 2 and heme A of subunit 1 to the active site in subunit 1, a binuclear center (BNC) formed by heme A3 and copper B (CU(B)). The BNC reduces molecular oxygen to 2 water molecules using 4 electrons from cytochrome c in the IMS and 4 protons from the mitochondrial matrix.</text>
</comment>
<comment type="catalytic activity">
    <reaction evidence="2">
        <text>4 Fe(II)-[cytochrome c] + O2 + 8 H(+)(in) = 4 Fe(III)-[cytochrome c] + 2 H2O + 4 H(+)(out)</text>
        <dbReference type="Rhea" id="RHEA:11436"/>
        <dbReference type="Rhea" id="RHEA-COMP:10350"/>
        <dbReference type="Rhea" id="RHEA-COMP:14399"/>
        <dbReference type="ChEBI" id="CHEBI:15377"/>
        <dbReference type="ChEBI" id="CHEBI:15378"/>
        <dbReference type="ChEBI" id="CHEBI:15379"/>
        <dbReference type="ChEBI" id="CHEBI:29033"/>
        <dbReference type="ChEBI" id="CHEBI:29034"/>
        <dbReference type="EC" id="7.1.1.9"/>
    </reaction>
    <physiologicalReaction direction="left-to-right" evidence="2">
        <dbReference type="Rhea" id="RHEA:11437"/>
    </physiologicalReaction>
</comment>
<comment type="cofactor">
    <cofactor evidence="3">
        <name>Cu cation</name>
        <dbReference type="ChEBI" id="CHEBI:23378"/>
    </cofactor>
    <text evidence="3">Binds a dinuclear copper A center per subunit.</text>
</comment>
<comment type="subunit">
    <text evidence="1 3">Component of the cytochrome c oxidase (complex IV, CIV), a multisubunit enzyme composed of 14 subunits. The complex is composed of a catalytic core of 3 subunits MT-CO1, MT-CO2 and MT-CO3, encoded in the mitochondrial DNA, and 11 supernumerary subunits COX4I, COX5A, COX5B, COX6A, COX6B, COX6C, COX7A, COX7B, COX7C, COX8 and NDUFA4, which are encoded in the nuclear genome. The complex exists as a monomer or a dimer and forms supercomplexes (SCs) in the inner mitochondrial membrane with NADH-ubiquinone oxidoreductase (complex I, CI) and ubiquinol-cytochrome c oxidoreductase (cytochrome b-c1 complex, complex III, CIII), resulting in different assemblies (supercomplex SCI(1)III(2)IV(1) and megacomplex MCI(2)III(2)IV(2)) (By similarity). Found in a complex with TMEM177, COA6, COX18, COX20, SCO1 and SCO2. Interacts with TMEM177 in a COX20-dependent manner. Interacts with COX20. Interacts with COX16 (By similarity).</text>
</comment>
<comment type="subcellular location">
    <subcellularLocation>
        <location evidence="3">Mitochondrion inner membrane</location>
        <topology evidence="3">Multi-pass membrane protein</topology>
    </subcellularLocation>
</comment>
<comment type="similarity">
    <text evidence="6">Belongs to the cytochrome c oxidase subunit 2 family.</text>
</comment>
<protein>
    <recommendedName>
        <fullName>Cytochrome c oxidase subunit 2</fullName>
        <ecNumber>7.1.1.9</ecNumber>
    </recommendedName>
    <alternativeName>
        <fullName>Cytochrome c oxidase polypeptide II</fullName>
    </alternativeName>
</protein>
<proteinExistence type="inferred from homology"/>
<dbReference type="EC" id="7.1.1.9"/>
<dbReference type="EMBL" id="U12703">
    <property type="protein sequence ID" value="AAA61412.1"/>
    <property type="molecule type" value="Genomic_DNA"/>
</dbReference>
<dbReference type="EMBL" id="U12704">
    <property type="protein sequence ID" value="AAA61413.1"/>
    <property type="molecule type" value="Genomic_DNA"/>
</dbReference>
<dbReference type="EMBL" id="D38115">
    <property type="protein sequence ID" value="BAA07308.1"/>
    <property type="molecule type" value="Genomic_DNA"/>
</dbReference>
<dbReference type="EMBL" id="X97716">
    <property type="protein sequence ID" value="CAA66302.1"/>
    <property type="molecule type" value="Genomic_DNA"/>
</dbReference>
<dbReference type="EMBL" id="X97712">
    <property type="protein sequence ID" value="CAA66298.1"/>
    <property type="molecule type" value="Genomic_DNA"/>
</dbReference>
<dbReference type="PIR" id="I61892">
    <property type="entry name" value="I61892"/>
</dbReference>
<dbReference type="PIR" id="T14142">
    <property type="entry name" value="T14142"/>
</dbReference>
<dbReference type="RefSeq" id="NP_008228.1">
    <property type="nucleotide sequence ID" value="NC_001646.1"/>
</dbReference>
<dbReference type="SMR" id="Q37605"/>
<dbReference type="GeneID" id="807910"/>
<dbReference type="KEGG" id="ppyg:807910"/>
<dbReference type="CTD" id="4513"/>
<dbReference type="GO" id="GO:0005743">
    <property type="term" value="C:mitochondrial inner membrane"/>
    <property type="evidence" value="ECO:0007669"/>
    <property type="project" value="UniProtKB-SubCell"/>
</dbReference>
<dbReference type="GO" id="GO:0005739">
    <property type="term" value="C:mitochondrion"/>
    <property type="evidence" value="ECO:0000250"/>
    <property type="project" value="UniProtKB"/>
</dbReference>
<dbReference type="GO" id="GO:0045277">
    <property type="term" value="C:respiratory chain complex IV"/>
    <property type="evidence" value="ECO:0000250"/>
    <property type="project" value="UniProtKB"/>
</dbReference>
<dbReference type="GO" id="GO:0005507">
    <property type="term" value="F:copper ion binding"/>
    <property type="evidence" value="ECO:0007669"/>
    <property type="project" value="InterPro"/>
</dbReference>
<dbReference type="GO" id="GO:0004129">
    <property type="term" value="F:cytochrome-c oxidase activity"/>
    <property type="evidence" value="ECO:0007669"/>
    <property type="project" value="UniProtKB-EC"/>
</dbReference>
<dbReference type="GO" id="GO:0042773">
    <property type="term" value="P:ATP synthesis coupled electron transport"/>
    <property type="evidence" value="ECO:0007669"/>
    <property type="project" value="TreeGrafter"/>
</dbReference>
<dbReference type="CDD" id="cd13912">
    <property type="entry name" value="CcO_II_C"/>
    <property type="match status" value="1"/>
</dbReference>
<dbReference type="FunFam" id="1.10.287.90:FF:000001">
    <property type="entry name" value="Cytochrome c oxidase subunit 2"/>
    <property type="match status" value="1"/>
</dbReference>
<dbReference type="FunFam" id="2.60.40.420:FF:000001">
    <property type="entry name" value="Cytochrome c oxidase subunit 2"/>
    <property type="match status" value="1"/>
</dbReference>
<dbReference type="Gene3D" id="1.10.287.90">
    <property type="match status" value="1"/>
</dbReference>
<dbReference type="Gene3D" id="2.60.40.420">
    <property type="entry name" value="Cupredoxins - blue copper proteins"/>
    <property type="match status" value="1"/>
</dbReference>
<dbReference type="InterPro" id="IPR045187">
    <property type="entry name" value="CcO_II"/>
</dbReference>
<dbReference type="InterPro" id="IPR002429">
    <property type="entry name" value="CcO_II-like_C"/>
</dbReference>
<dbReference type="InterPro" id="IPR034210">
    <property type="entry name" value="CcO_II_C"/>
</dbReference>
<dbReference type="InterPro" id="IPR001505">
    <property type="entry name" value="Copper_CuA"/>
</dbReference>
<dbReference type="InterPro" id="IPR008972">
    <property type="entry name" value="Cupredoxin"/>
</dbReference>
<dbReference type="InterPro" id="IPR014222">
    <property type="entry name" value="Cyt_c_oxidase_su2"/>
</dbReference>
<dbReference type="InterPro" id="IPR011759">
    <property type="entry name" value="Cyt_c_oxidase_su2_TM_dom"/>
</dbReference>
<dbReference type="InterPro" id="IPR036257">
    <property type="entry name" value="Cyt_c_oxidase_su2_TM_sf"/>
</dbReference>
<dbReference type="NCBIfam" id="TIGR02866">
    <property type="entry name" value="CoxB"/>
    <property type="match status" value="1"/>
</dbReference>
<dbReference type="PANTHER" id="PTHR22888:SF9">
    <property type="entry name" value="CYTOCHROME C OXIDASE SUBUNIT 2"/>
    <property type="match status" value="1"/>
</dbReference>
<dbReference type="PANTHER" id="PTHR22888">
    <property type="entry name" value="CYTOCHROME C OXIDASE, SUBUNIT II"/>
    <property type="match status" value="1"/>
</dbReference>
<dbReference type="Pfam" id="PF00116">
    <property type="entry name" value="COX2"/>
    <property type="match status" value="1"/>
</dbReference>
<dbReference type="Pfam" id="PF02790">
    <property type="entry name" value="COX2_TM"/>
    <property type="match status" value="1"/>
</dbReference>
<dbReference type="PRINTS" id="PR01166">
    <property type="entry name" value="CYCOXIDASEII"/>
</dbReference>
<dbReference type="SUPFAM" id="SSF49503">
    <property type="entry name" value="Cupredoxins"/>
    <property type="match status" value="1"/>
</dbReference>
<dbReference type="SUPFAM" id="SSF81464">
    <property type="entry name" value="Cytochrome c oxidase subunit II-like, transmembrane region"/>
    <property type="match status" value="1"/>
</dbReference>
<dbReference type="PROSITE" id="PS00078">
    <property type="entry name" value="COX2"/>
    <property type="match status" value="1"/>
</dbReference>
<dbReference type="PROSITE" id="PS50857">
    <property type="entry name" value="COX2_CUA"/>
    <property type="match status" value="1"/>
</dbReference>
<dbReference type="PROSITE" id="PS50999">
    <property type="entry name" value="COX2_TM"/>
    <property type="match status" value="1"/>
</dbReference>
<sequence length="227" mass="25652">MAHRAQVGLQDATSPIMEELVIFHDHALMIIFLICFLVLYALFLTLTTKLTNTNISDAQEMETIWTTLPAIILILIALPSLRILYLTDEINDPSFTIKSIGHQWYWTYEYTDYGGLIFNSYMLPPLFLEPGDLRLLDVDNRVVLPVEAPVRMMITSQDVLHSWTVPSLGLKTDAIPGRLNQTTFTATRPGVYYGQCSEICGANHSFMPIVLELIPLKIFEMGPVFAL</sequence>
<gene>
    <name type="primary">MT-CO2</name>
    <name type="synonym">COII</name>
    <name type="synonym">COX2</name>
    <name type="synonym">COXII</name>
    <name type="synonym">MTCO2</name>
</gene>
<geneLocation type="mitochondrion"/>
<evidence type="ECO:0000250" key="1">
    <source>
        <dbReference type="UniProtKB" id="P00403"/>
    </source>
</evidence>
<evidence type="ECO:0000250" key="2">
    <source>
        <dbReference type="UniProtKB" id="P00410"/>
    </source>
</evidence>
<evidence type="ECO:0000250" key="3">
    <source>
        <dbReference type="UniProtKB" id="P68530"/>
    </source>
</evidence>
<evidence type="ECO:0000269" key="4">
    <source>
    </source>
</evidence>
<evidence type="ECO:0000269" key="5">
    <source>
    </source>
</evidence>
<evidence type="ECO:0000305" key="6"/>
<reference key="1">
    <citation type="journal article" date="1994" name="Proc. Natl. Acad. Sci. U.S.A.">
        <title>Gene trees and hominoid phylogeny.</title>
        <authorList>
            <person name="Ruvolo M."/>
            <person name="Pan D."/>
            <person name="Zehr S."/>
            <person name="Goldberg T."/>
            <person name="Disotell T.R."/>
            <person name="von Dornum M."/>
        </authorList>
    </citation>
    <scope>NUCLEOTIDE SEQUENCE [GENOMIC DNA]</scope>
    <scope>VARIANTS ALA-4; SER-54; ILE-67; LEU-184 AND THR-226</scope>
    <source>
        <strain>Isolate San Diego zoo Ppy2</strain>
        <strain>Isolate San Diego zoo Ppy3</strain>
    </source>
</reference>
<reference key="2">
    <citation type="journal article" date="1995" name="Proc. Natl. Acad. Sci. U.S.A.">
        <title>Recent African origin of modern humans revealed by complete sequences of hominoid mitochondrial DNAs.</title>
        <authorList>
            <person name="Horai S."/>
            <person name="Hayasaka K."/>
            <person name="Kondo R."/>
            <person name="Tsugane K."/>
            <person name="Takahata N."/>
        </authorList>
    </citation>
    <scope>NUCLEOTIDE SEQUENCE [GENOMIC DNA]</scope>
</reference>
<reference key="3">
    <citation type="journal article" date="1996" name="J. Mol. Evol.">
        <title>The mitochondrial DNA molecule of Sumatran orangutan and a molecular proposal for two (Bornean and Sumatran) species of orangutan.</title>
        <authorList>
            <person name="Xu X."/>
            <person name="Arnason U."/>
        </authorList>
    </citation>
    <scope>NUCLEOTIDE SEQUENCE [GENOMIC DNA]</scope>
    <scope>VARIANTS ALA-4; ILE-38 AND ILE-67</scope>
    <source>
        <strain>Isolate Anna</strain>
        <strain>Isolate Dennis</strain>
    </source>
</reference>
<organism>
    <name type="scientific">Pongo pygmaeus</name>
    <name type="common">Bornean orangutan</name>
    <dbReference type="NCBI Taxonomy" id="9600"/>
    <lineage>
        <taxon>Eukaryota</taxon>
        <taxon>Metazoa</taxon>
        <taxon>Chordata</taxon>
        <taxon>Craniata</taxon>
        <taxon>Vertebrata</taxon>
        <taxon>Euteleostomi</taxon>
        <taxon>Mammalia</taxon>
        <taxon>Eutheria</taxon>
        <taxon>Euarchontoglires</taxon>
        <taxon>Primates</taxon>
        <taxon>Haplorrhini</taxon>
        <taxon>Catarrhini</taxon>
        <taxon>Hominidae</taxon>
        <taxon>Pongo</taxon>
    </lineage>
</organism>
<feature type="chain" id="PRO_0000183670" description="Cytochrome c oxidase subunit 2">
    <location>
        <begin position="1"/>
        <end position="227"/>
    </location>
</feature>
<feature type="topological domain" description="Mitochondrial intermembrane" evidence="3">
    <location>
        <begin position="1"/>
        <end position="14"/>
    </location>
</feature>
<feature type="transmembrane region" description="Helical; Name=I" evidence="3">
    <location>
        <begin position="15"/>
        <end position="45"/>
    </location>
</feature>
<feature type="topological domain" description="Mitochondrial matrix" evidence="3">
    <location>
        <begin position="46"/>
        <end position="59"/>
    </location>
</feature>
<feature type="transmembrane region" description="Helical; Name=II" evidence="3">
    <location>
        <begin position="60"/>
        <end position="87"/>
    </location>
</feature>
<feature type="topological domain" description="Mitochondrial intermembrane" evidence="3">
    <location>
        <begin position="88"/>
        <end position="227"/>
    </location>
</feature>
<feature type="binding site" evidence="3">
    <location>
        <position position="161"/>
    </location>
    <ligand>
        <name>Cu cation</name>
        <dbReference type="ChEBI" id="CHEBI:23378"/>
        <label>A1</label>
    </ligand>
</feature>
<feature type="binding site" evidence="3">
    <location>
        <position position="196"/>
    </location>
    <ligand>
        <name>Cu cation</name>
        <dbReference type="ChEBI" id="CHEBI:23378"/>
        <label>A1</label>
    </ligand>
</feature>
<feature type="binding site" evidence="3">
    <location>
        <position position="196"/>
    </location>
    <ligand>
        <name>Cu cation</name>
        <dbReference type="ChEBI" id="CHEBI:23378"/>
        <label>A2</label>
    </ligand>
</feature>
<feature type="binding site" evidence="3">
    <location>
        <position position="198"/>
    </location>
    <ligand>
        <name>Cu cation</name>
        <dbReference type="ChEBI" id="CHEBI:23378"/>
        <label>A2</label>
    </ligand>
</feature>
<feature type="binding site" evidence="3">
    <location>
        <position position="198"/>
    </location>
    <ligand>
        <name>Mg(2+)</name>
        <dbReference type="ChEBI" id="CHEBI:18420"/>
        <note>ligand shared with MT-CO1</note>
    </ligand>
</feature>
<feature type="binding site" evidence="3">
    <location>
        <position position="200"/>
    </location>
    <ligand>
        <name>Cu cation</name>
        <dbReference type="ChEBI" id="CHEBI:23378"/>
        <label>A1</label>
    </ligand>
</feature>
<feature type="binding site" evidence="3">
    <location>
        <position position="200"/>
    </location>
    <ligand>
        <name>Cu cation</name>
        <dbReference type="ChEBI" id="CHEBI:23378"/>
        <label>A2</label>
    </ligand>
</feature>
<feature type="binding site" evidence="3">
    <location>
        <position position="204"/>
    </location>
    <ligand>
        <name>Cu cation</name>
        <dbReference type="ChEBI" id="CHEBI:23378"/>
        <label>A2</label>
    </ligand>
</feature>
<feature type="binding site" evidence="3">
    <location>
        <position position="207"/>
    </location>
    <ligand>
        <name>Cu cation</name>
        <dbReference type="ChEBI" id="CHEBI:23378"/>
        <label>A1</label>
    </ligand>
</feature>
<feature type="sequence variant" id="VAR_019058" description="In strain: Isolate San Diego zoo Ppy3, Isolate Anna and Isolate Dennis." evidence="4 5">
    <original>R</original>
    <variation>A</variation>
    <location>
        <position position="4"/>
    </location>
</feature>
<feature type="sequence variant" id="VAR_019554" description="In strain: Isolate Anna." evidence="5">
    <original>V</original>
    <variation>I</variation>
    <location>
        <position position="38"/>
    </location>
</feature>
<feature type="sequence variant" id="VAR_019059" description="In strain: Isolate San Diego zoo Ppy3, Isolate Anna and Isolate Dennis." evidence="4">
    <original>N</original>
    <variation>S</variation>
    <location>
        <position position="54"/>
    </location>
</feature>
<feature type="sequence variant" id="VAR_019060" description="In strain: Isolate San Diego zoo Ppy3." evidence="4 5">
    <original>T</original>
    <variation>I</variation>
    <location>
        <position position="67"/>
    </location>
</feature>
<feature type="sequence variant" id="VAR_019061" description="In strain: Isolate San Diego zoo Ppy3." evidence="4">
    <original>F</original>
    <variation>L</variation>
    <location>
        <position position="184"/>
    </location>
</feature>
<feature type="sequence variant" id="VAR_019062" description="In strain: Isolate San Diego zoo PPY3." evidence="4">
    <original>A</original>
    <variation>T</variation>
    <location>
        <position position="226"/>
    </location>
</feature>
<keyword id="KW-0186">Copper</keyword>
<keyword id="KW-0249">Electron transport</keyword>
<keyword id="KW-0460">Magnesium</keyword>
<keyword id="KW-0472">Membrane</keyword>
<keyword id="KW-0479">Metal-binding</keyword>
<keyword id="KW-0496">Mitochondrion</keyword>
<keyword id="KW-0999">Mitochondrion inner membrane</keyword>
<keyword id="KW-0679">Respiratory chain</keyword>
<keyword id="KW-1278">Translocase</keyword>
<keyword id="KW-0812">Transmembrane</keyword>
<keyword id="KW-1133">Transmembrane helix</keyword>
<keyword id="KW-0813">Transport</keyword>
<accession>Q37605</accession>
<accession>P92721</accession>
<accession>P92722</accession>
<accession>Q37606</accession>
<accession>Q37607</accession>